<accession>P01699</accession>
<accession>A0A0B4J1U1</accession>
<accession>A0A0G2JQC2</accession>
<accession>A0A0U1RVH6</accession>
<accession>P06887</accession>
<protein>
    <recommendedName>
        <fullName evidence="6 11">Immunoglobulin lambda variable 1-44</fullName>
    </recommendedName>
    <alternativeName>
        <fullName evidence="13">Ig lambda chain V-I region MEM</fullName>
    </alternativeName>
    <alternativeName>
        <fullName evidence="14">Ig lambda chain V-I region VOR</fullName>
    </alternativeName>
</protein>
<proteinExistence type="evidence at protein level"/>
<sequence>MASFPLLLTLLTHCAGSWAQSVLTQPPSASGTPGQRVTISCSGSSSNIGSNTVNWYQQLPGTAPKLLIYSNNQRPSGVPDRFSGSKSGTSASLAISGLQSEDEADYYCAAWDDSLNG</sequence>
<gene>
    <name evidence="6 11" type="primary">IGLV1-44</name>
</gene>
<keyword id="KW-1064">Adaptive immunity</keyword>
<keyword id="KW-1003">Cell membrane</keyword>
<keyword id="KW-0903">Direct protein sequencing</keyword>
<keyword id="KW-1015">Disulfide bond</keyword>
<keyword id="KW-0391">Immunity</keyword>
<keyword id="KW-1280">Immunoglobulin</keyword>
<keyword id="KW-0393">Immunoglobulin domain</keyword>
<keyword id="KW-0472">Membrane</keyword>
<keyword id="KW-1267">Proteomics identification</keyword>
<keyword id="KW-0873">Pyrrolidone carboxylic acid</keyword>
<keyword id="KW-1185">Reference proteome</keyword>
<keyword id="KW-0964">Secreted</keyword>
<keyword id="KW-0732">Signal</keyword>
<feature type="signal peptide" evidence="4 5">
    <location>
        <begin position="1"/>
        <end position="19"/>
    </location>
</feature>
<feature type="chain" id="PRO_0000059822" description="Immunoglobulin lambda variable 1-44" evidence="4 5">
    <location>
        <begin position="20"/>
        <end position="117"/>
    </location>
</feature>
<feature type="domain" description="Ig-like" evidence="2">
    <location>
        <begin position="20"/>
        <end position="117" status="greater than"/>
    </location>
</feature>
<feature type="region of interest" description="Framework-1" evidence="1">
    <location>
        <begin position="20"/>
        <end position="44"/>
    </location>
</feature>
<feature type="region of interest" description="Disordered" evidence="3">
    <location>
        <begin position="24"/>
        <end position="45"/>
    </location>
</feature>
<feature type="region of interest" description="Complementarity-determining-1" evidence="1">
    <location>
        <begin position="45"/>
        <end position="52"/>
    </location>
</feature>
<feature type="region of interest" description="Framework-2" evidence="1">
    <location>
        <begin position="53"/>
        <end position="69"/>
    </location>
</feature>
<feature type="region of interest" description="Complementarity-determining-2" evidence="1">
    <location>
        <begin position="70"/>
        <end position="72"/>
    </location>
</feature>
<feature type="region of interest" description="Framework-3" evidence="1">
    <location>
        <begin position="73"/>
        <end position="108"/>
    </location>
</feature>
<feature type="region of interest" description="Complementarity-determining-3" evidence="1">
    <location>
        <begin position="109"/>
        <end position="117" status="greater than"/>
    </location>
</feature>
<feature type="compositionally biased region" description="Polar residues" evidence="3">
    <location>
        <begin position="24"/>
        <end position="35"/>
    </location>
</feature>
<feature type="modified residue" description="Pyrrolidone carboxylic acid" evidence="4 5">
    <location>
        <position position="20"/>
    </location>
</feature>
<feature type="disulfide bond" evidence="2">
    <location>
        <begin position="41"/>
        <end position="108"/>
    </location>
</feature>
<feature type="sequence conflict" description="In Ref. 3; AA sequence." evidence="12" ref="3">
    <original>Q</original>
    <variation>G</variation>
    <location>
        <position position="35"/>
    </location>
</feature>
<feature type="sequence conflict" description="In Ref. 2; AA sequence." evidence="12" ref="2">
    <original>SSSN</original>
    <variation>GNFD</variation>
    <location>
        <begin position="44"/>
        <end position="47"/>
    </location>
</feature>
<feature type="sequence conflict" description="In Ref. 3; AA sequence." evidence="12" ref="3">
    <original>I</original>
    <variation>V</variation>
    <location>
        <position position="48"/>
    </location>
</feature>
<feature type="sequence conflict" description="In Ref. 2; AA sequence." evidence="12" ref="2">
    <original>SNT</original>
    <variation>RNS</variation>
    <location>
        <begin position="50"/>
        <end position="52"/>
    </location>
</feature>
<feature type="sequence conflict" description="In Ref. 3; AA sequence." evidence="12" ref="3">
    <original>TVN</original>
    <variation>ZPAY</variation>
    <location>
        <begin position="52"/>
        <end position="54"/>
    </location>
</feature>
<feature type="sequence conflict" description="In Ref. 2; AA sequence." evidence="12" ref="2">
    <original>QL</original>
    <variation>VH</variation>
    <location>
        <begin position="58"/>
        <end position="59"/>
    </location>
</feature>
<feature type="sequence conflict" description="In Ref. 2; AA sequence." evidence="12" ref="2">
    <original>K</original>
    <variation>R</variation>
    <location>
        <position position="65"/>
    </location>
</feature>
<feature type="sequence conflict" description="In Ref. 3; AA sequence." evidence="12" ref="3">
    <original>SN</original>
    <variation>NY</variation>
    <location>
        <begin position="70"/>
        <end position="71"/>
    </location>
</feature>
<feature type="sequence conflict" description="In Ref. 2; AA sequence." evidence="12" ref="2">
    <original>NN</original>
    <variation>SD</variation>
    <location>
        <begin position="71"/>
        <end position="72"/>
    </location>
</feature>
<feature type="sequence conflict" description="In Ref. 2; AA sequence." evidence="12" ref="2">
    <original>P</original>
    <variation>S</variation>
    <location>
        <position position="75"/>
    </location>
</feature>
<feature type="sequence conflict" description="In Ref. 3; AA sequence." evidence="12" ref="3">
    <original>GSK</original>
    <variation>ASR</variation>
    <location>
        <begin position="84"/>
        <end position="86"/>
    </location>
</feature>
<feature type="sequence conflict" description="In Ref. 2; AA sequence." evidence="12" ref="2">
    <original>D</original>
    <variation>N</variation>
    <location>
        <position position="102"/>
    </location>
</feature>
<feature type="sequence conflict" description="In Ref. 2; AA sequence." evidence="12" ref="2">
    <original>Y</original>
    <variation>F</variation>
    <location>
        <position position="107"/>
    </location>
</feature>
<feature type="sequence conflict" description="In Ref. 2; AA sequence." evidence="12" ref="2">
    <original>A</original>
    <variation>T</variation>
    <location>
        <position position="110"/>
    </location>
</feature>
<feature type="sequence conflict" description="In Ref. 2; AA sequence and 3; AA sequence." evidence="12" ref="2 3">
    <original>N</original>
    <variation>D</variation>
    <location>
        <position position="116"/>
    </location>
</feature>
<feature type="non-terminal residue">
    <location>
        <position position="117"/>
    </location>
</feature>
<organism>
    <name type="scientific">Homo sapiens</name>
    <name type="common">Human</name>
    <dbReference type="NCBI Taxonomy" id="9606"/>
    <lineage>
        <taxon>Eukaryota</taxon>
        <taxon>Metazoa</taxon>
        <taxon>Chordata</taxon>
        <taxon>Craniata</taxon>
        <taxon>Vertebrata</taxon>
        <taxon>Euteleostomi</taxon>
        <taxon>Mammalia</taxon>
        <taxon>Eutheria</taxon>
        <taxon>Euarchontoglires</taxon>
        <taxon>Primates</taxon>
        <taxon>Haplorrhini</taxon>
        <taxon>Catarrhini</taxon>
        <taxon>Hominidae</taxon>
        <taxon>Homo</taxon>
    </lineage>
</organism>
<reference key="1">
    <citation type="journal article" date="1999" name="Nature">
        <title>The DNA sequence of human chromosome 22.</title>
        <authorList>
            <person name="Dunham I."/>
            <person name="Hunt A.R."/>
            <person name="Collins J.E."/>
            <person name="Bruskiewich R."/>
            <person name="Beare D.M."/>
            <person name="Clamp M."/>
            <person name="Smink L.J."/>
            <person name="Ainscough R."/>
            <person name="Almeida J.P."/>
            <person name="Babbage A.K."/>
            <person name="Bagguley C."/>
            <person name="Bailey J."/>
            <person name="Barlow K.F."/>
            <person name="Bates K.N."/>
            <person name="Beasley O.P."/>
            <person name="Bird C.P."/>
            <person name="Blakey S.E."/>
            <person name="Bridgeman A.M."/>
            <person name="Buck D."/>
            <person name="Burgess J."/>
            <person name="Burrill W.D."/>
            <person name="Burton J."/>
            <person name="Carder C."/>
            <person name="Carter N.P."/>
            <person name="Chen Y."/>
            <person name="Clark G."/>
            <person name="Clegg S.M."/>
            <person name="Cobley V.E."/>
            <person name="Cole C.G."/>
            <person name="Collier R.E."/>
            <person name="Connor R."/>
            <person name="Conroy D."/>
            <person name="Corby N.R."/>
            <person name="Coville G.J."/>
            <person name="Cox A.V."/>
            <person name="Davis J."/>
            <person name="Dawson E."/>
            <person name="Dhami P.D."/>
            <person name="Dockree C."/>
            <person name="Dodsworth S.J."/>
            <person name="Durbin R.M."/>
            <person name="Ellington A.G."/>
            <person name="Evans K.L."/>
            <person name="Fey J.M."/>
            <person name="Fleming K."/>
            <person name="French L."/>
            <person name="Garner A.A."/>
            <person name="Gilbert J.G.R."/>
            <person name="Goward M.E."/>
            <person name="Grafham D.V."/>
            <person name="Griffiths M.N.D."/>
            <person name="Hall C."/>
            <person name="Hall R.E."/>
            <person name="Hall-Tamlyn G."/>
            <person name="Heathcott R.W."/>
            <person name="Ho S."/>
            <person name="Holmes S."/>
            <person name="Hunt S.E."/>
            <person name="Jones M.C."/>
            <person name="Kershaw J."/>
            <person name="Kimberley A.M."/>
            <person name="King A."/>
            <person name="Laird G.K."/>
            <person name="Langford C.F."/>
            <person name="Leversha M.A."/>
            <person name="Lloyd C."/>
            <person name="Lloyd D.M."/>
            <person name="Martyn I.D."/>
            <person name="Mashreghi-Mohammadi M."/>
            <person name="Matthews L.H."/>
            <person name="Mccann O.T."/>
            <person name="Mcclay J."/>
            <person name="Mclaren S."/>
            <person name="McMurray A.A."/>
            <person name="Milne S.A."/>
            <person name="Mortimore B.J."/>
            <person name="Odell C.N."/>
            <person name="Pavitt R."/>
            <person name="Pearce A.V."/>
            <person name="Pearson D."/>
            <person name="Phillimore B.J.C.T."/>
            <person name="Phillips S.H."/>
            <person name="Plumb R.W."/>
            <person name="Ramsay H."/>
            <person name="Ramsey Y."/>
            <person name="Rogers L."/>
            <person name="Ross M.T."/>
            <person name="Scott C.E."/>
            <person name="Sehra H.K."/>
            <person name="Skuce C.D."/>
            <person name="Smalley S."/>
            <person name="Smith M.L."/>
            <person name="Soderlund C."/>
            <person name="Spragon L."/>
            <person name="Steward C.A."/>
            <person name="Sulston J.E."/>
            <person name="Swann R.M."/>
            <person name="Vaudin M."/>
            <person name="Wall M."/>
            <person name="Wallis J.M."/>
            <person name="Whiteley M.N."/>
            <person name="Willey D.L."/>
            <person name="Williams L."/>
            <person name="Williams S.A."/>
            <person name="Williamson H."/>
            <person name="Wilmer T.E."/>
            <person name="Wilming L."/>
            <person name="Wright C.L."/>
            <person name="Hubbard T."/>
            <person name="Bentley D.R."/>
            <person name="Beck S."/>
            <person name="Rogers J."/>
            <person name="Shimizu N."/>
            <person name="Minoshima S."/>
            <person name="Kawasaki K."/>
            <person name="Sasaki T."/>
            <person name="Asakawa S."/>
            <person name="Kudoh J."/>
            <person name="Shintani A."/>
            <person name="Shibuya K."/>
            <person name="Yoshizaki Y."/>
            <person name="Aoki N."/>
            <person name="Mitsuyama S."/>
            <person name="Roe B.A."/>
            <person name="Chen F."/>
            <person name="Chu L."/>
            <person name="Crabtree J."/>
            <person name="Deschamps S."/>
            <person name="Do A."/>
            <person name="Do T."/>
            <person name="Dorman A."/>
            <person name="Fang F."/>
            <person name="Fu Y."/>
            <person name="Hu P."/>
            <person name="Hua A."/>
            <person name="Kenton S."/>
            <person name="Lai H."/>
            <person name="Lao H.I."/>
            <person name="Lewis J."/>
            <person name="Lewis S."/>
            <person name="Lin S.-P."/>
            <person name="Loh P."/>
            <person name="Malaj E."/>
            <person name="Nguyen T."/>
            <person name="Pan H."/>
            <person name="Phan S."/>
            <person name="Qi S."/>
            <person name="Qian Y."/>
            <person name="Ray L."/>
            <person name="Ren Q."/>
            <person name="Shaull S."/>
            <person name="Sloan D."/>
            <person name="Song L."/>
            <person name="Wang Q."/>
            <person name="Wang Y."/>
            <person name="Wang Z."/>
            <person name="White J."/>
            <person name="Willingham D."/>
            <person name="Wu H."/>
            <person name="Yao Z."/>
            <person name="Zhan M."/>
            <person name="Zhang G."/>
            <person name="Chissoe S."/>
            <person name="Murray J."/>
            <person name="Miller N."/>
            <person name="Minx P."/>
            <person name="Fulton R."/>
            <person name="Johnson D."/>
            <person name="Bemis G."/>
            <person name="Bentley D."/>
            <person name="Bradshaw H."/>
            <person name="Bourne S."/>
            <person name="Cordes M."/>
            <person name="Du Z."/>
            <person name="Fulton L."/>
            <person name="Goela D."/>
            <person name="Graves T."/>
            <person name="Hawkins J."/>
            <person name="Hinds K."/>
            <person name="Kemp K."/>
            <person name="Latreille P."/>
            <person name="Layman D."/>
            <person name="Ozersky P."/>
            <person name="Rohlfing T."/>
            <person name="Scheet P."/>
            <person name="Walker C."/>
            <person name="Wamsley A."/>
            <person name="Wohldmann P."/>
            <person name="Pepin K."/>
            <person name="Nelson J."/>
            <person name="Korf I."/>
            <person name="Bedell J.A."/>
            <person name="Hillier L.W."/>
            <person name="Mardis E."/>
            <person name="Waterston R."/>
            <person name="Wilson R."/>
            <person name="Emanuel B.S."/>
            <person name="Shaikh T."/>
            <person name="Kurahashi H."/>
            <person name="Saitta S."/>
            <person name="Budarf M.L."/>
            <person name="McDermid H.E."/>
            <person name="Johnson A."/>
            <person name="Wong A.C.C."/>
            <person name="Morrow B.E."/>
            <person name="Edelmann L."/>
            <person name="Kim U.J."/>
            <person name="Shizuya H."/>
            <person name="Simon M.I."/>
            <person name="Dumanski J.P."/>
            <person name="Peyrard M."/>
            <person name="Kedra D."/>
            <person name="Seroussi E."/>
            <person name="Fransson I."/>
            <person name="Tapia I."/>
            <person name="Bruder C.E."/>
            <person name="O'Brien K.P."/>
            <person name="Wilkinson P."/>
            <person name="Bodenteich A."/>
            <person name="Hartman K."/>
            <person name="Hu X."/>
            <person name="Khan A.S."/>
            <person name="Lane L."/>
            <person name="Tilahun Y."/>
            <person name="Wright H."/>
        </authorList>
    </citation>
    <scope>NUCLEOTIDE SEQUENCE [LARGE SCALE GENOMIC DNA] (IMGT ALLELE IGLV1-44*01)</scope>
</reference>
<reference key="2">
    <citation type="journal article" date="1975" name="Hoppe-Seyler's Z. Physiol. Chem.">
        <title>Pattern of antibody structure. The amino acid sequence of a monoclonal immunoglobulin L-chain of lambda-type, subgroup I (Bence-Jones-protein Vor.). A contribution to the elucidation of the origin of antibody specificity.</title>
        <authorList>
            <person name="Engelhard M."/>
            <person name="Hilschmann N."/>
        </authorList>
    </citation>
    <scope>PROTEIN SEQUENCE OF 20-117</scope>
    <scope>PYROGLUTAMATE FORMATION AT GLN-20</scope>
</reference>
<reference key="3">
    <citation type="journal article" date="1985" name="Eur. J. Biochem.">
        <title>The amino acid sequence of a lambda light chain presenting abnormal physicochemical and antigenic features.</title>
        <authorList>
            <person name="Mihaesco E."/>
            <person name="Roy J.P."/>
            <person name="Congy N."/>
            <person name="Peran-Rivat L."/>
            <person name="Mihaesco C."/>
        </authorList>
    </citation>
    <scope>PROTEIN SEQUENCE OF 20-117</scope>
    <scope>PYROGLUTAMATE FORMATION AT GLN-20</scope>
</reference>
<reference key="4">
    <citation type="journal article" date="2001" name="Exp. Clin. Immunogenet.">
        <title>Nomenclature of the human immunoglobulin lambda (IGL) genes.</title>
        <authorList>
            <person name="Lefranc M.P."/>
        </authorList>
    </citation>
    <scope>NOMENCLATURE</scope>
</reference>
<reference key="5">
    <citation type="book" date="2001" name="The Immunoglobulin FactsBook.">
        <title>The Immunoglobulin FactsBook.</title>
        <editorList>
            <person name="Lefranc M.P."/>
            <person name="Lefranc G."/>
        </editorList>
        <authorList>
            <person name="Lefranc M.P."/>
            <person name="Lefranc G."/>
        </authorList>
    </citation>
    <scope>NOMENCLATURE</scope>
</reference>
<reference key="6">
    <citation type="journal article" date="2007" name="Annu. Rev. Genet.">
        <title>Immunoglobulin somatic hypermutation.</title>
        <authorList>
            <person name="Teng G."/>
            <person name="Papavasiliou F.N."/>
        </authorList>
    </citation>
    <scope>REVIEW ON SOMATIC HYPERMUTATION</scope>
</reference>
<reference key="7">
    <citation type="journal article" date="2010" name="J. Allergy Clin. Immunol.">
        <title>Structure and function of immunoglobulins.</title>
        <authorList>
            <person name="Schroeder H.W. Jr."/>
            <person name="Cavacini L."/>
        </authorList>
    </citation>
    <scope>REVIEW ON IMMUNOGLOBULINS</scope>
</reference>
<reference key="8">
    <citation type="journal article" date="2012" name="Nat. Rev. Immunol.">
        <title>Molecular programming of B cell memory.</title>
        <authorList>
            <person name="McHeyzer-Williams M."/>
            <person name="Okitsu S."/>
            <person name="Wang N."/>
            <person name="McHeyzer-Williams L."/>
        </authorList>
    </citation>
    <scope>REVIEW ON FUNCTION</scope>
</reference>
<reference key="9">
    <citation type="journal article" date="2014" name="Front. Immunol.">
        <title>Immunoglobulin and T Cell Receptor Genes: IMGT((R)) and the Birth and Rise of Immunoinformatics.</title>
        <authorList>
            <person name="Lefranc M.P."/>
        </authorList>
    </citation>
    <scope>NOMENCLATURE</scope>
</reference>
<name>LV144_HUMAN</name>
<evidence type="ECO:0000250" key="1">
    <source>
        <dbReference type="UniProtKB" id="P01721"/>
    </source>
</evidence>
<evidence type="ECO:0000255" key="2">
    <source>
        <dbReference type="PROSITE-ProRule" id="PRU00114"/>
    </source>
</evidence>
<evidence type="ECO:0000256" key="3">
    <source>
        <dbReference type="SAM" id="MobiDB-lite"/>
    </source>
</evidence>
<evidence type="ECO:0000269" key="4">
    <source>
    </source>
</evidence>
<evidence type="ECO:0000269" key="5">
    <source>
    </source>
</evidence>
<evidence type="ECO:0000303" key="6">
    <source>
    </source>
</evidence>
<evidence type="ECO:0000303" key="7">
    <source>
    </source>
</evidence>
<evidence type="ECO:0000303" key="8">
    <source>
    </source>
</evidence>
<evidence type="ECO:0000303" key="9">
    <source>
    </source>
</evidence>
<evidence type="ECO:0000303" key="10">
    <source>
    </source>
</evidence>
<evidence type="ECO:0000303" key="11">
    <source ref="5"/>
</evidence>
<evidence type="ECO:0000305" key="12"/>
<evidence type="ECO:0000305" key="13">
    <source>
    </source>
</evidence>
<evidence type="ECO:0000305" key="14">
    <source>
    </source>
</evidence>
<comment type="function">
    <text evidence="7 8 9 10">V region of the variable domain of immunoglobulin light chains that participates in the antigen recognition (PubMed:24600447). Immunoglobulins, also known as antibodies, are membrane-bound or secreted glycoproteins produced by B lymphocytes. In the recognition phase of humoral immunity, the membrane-bound immunoglobulins serve as receptors which, upon binding of a specific antigen, trigger the clonal expansion and differentiation of B lymphocytes into immunoglobulins-secreting plasma cells. Secreted immunoglobulins mediate the effector phase of humoral immunity, which results in the elimination of bound antigens (PubMed:20176268, PubMed:22158414). The antigen binding site is formed by the variable domain of one heavy chain, together with that of its associated light chain. Thus, each immunoglobulin has two antigen binding sites with remarkable affinity for a particular antigen. The variable domains are assembled by a process called V-(D)-J rearrangement and can then be subjected to somatic hypermutations which, after exposure to antigen and selection, allow affinity maturation for a particular antigen (PubMed:17576170, PubMed:20176268).</text>
</comment>
<comment type="subunit">
    <text evidence="8">Immunoglobulins are composed of two identical heavy chains and two identical light chains; disulfide-linked.</text>
</comment>
<comment type="subcellular location">
    <subcellularLocation>
        <location evidence="8 9">Secreted</location>
    </subcellularLocation>
    <subcellularLocation>
        <location evidence="8 9">Cell membrane</location>
    </subcellularLocation>
</comment>
<comment type="polymorphism">
    <text>There are several alleles. The sequence shown is that of IMGT allele IGLV1-44*01.</text>
</comment>
<comment type="caution">
    <text evidence="12">For an example of a full-length immunoglobulin lambda light chain see AC P0DOX8.</text>
</comment>
<dbReference type="EMBL" id="AC245291">
    <property type="status" value="NOT_ANNOTATED_CDS"/>
    <property type="molecule type" value="Genomic_DNA"/>
</dbReference>
<dbReference type="PIR" id="A01962">
    <property type="entry name" value="L1HUVO"/>
</dbReference>
<dbReference type="PIR" id="A25479">
    <property type="entry name" value="L1HUMM"/>
</dbReference>
<dbReference type="EMDB" id="EMD-25783"/>
<dbReference type="EMDB" id="EMD-25784"/>
<dbReference type="EMDB" id="EMD-25785"/>
<dbReference type="EMDB" id="EMD-36429"/>
<dbReference type="EMDB" id="EMD-36430"/>
<dbReference type="EMDB" id="EMD-36431"/>
<dbReference type="EMDB" id="EMD-36436"/>
<dbReference type="EMDB" id="EMD-36437"/>
<dbReference type="EMDB" id="EMD-36438"/>
<dbReference type="PCDDB" id="P01699"/>
<dbReference type="SMR" id="P01699"/>
<dbReference type="FunCoup" id="P01699">
    <property type="interactions" value="405"/>
</dbReference>
<dbReference type="IMGT_GENE-DB" id="IGLV1-44"/>
<dbReference type="GlyGen" id="P01699">
    <property type="glycosylation" value="1 site"/>
</dbReference>
<dbReference type="BioMuta" id="IGLV1-44"/>
<dbReference type="DMDM" id="126537"/>
<dbReference type="jPOST" id="P01699"/>
<dbReference type="MassIVE" id="P01699"/>
<dbReference type="Ensembl" id="ENST00000390297.3">
    <property type="protein sequence ID" value="ENSP00000374832.3"/>
    <property type="gene ID" value="ENSG00000211651.3"/>
</dbReference>
<dbReference type="Ensembl" id="ENST00000628287.1">
    <property type="protein sequence ID" value="ENSP00000485735.1"/>
    <property type="gene ID" value="ENSG00000274854.2"/>
</dbReference>
<dbReference type="AGR" id="HGNC:5879"/>
<dbReference type="GeneCards" id="IGLV1-44"/>
<dbReference type="HGNC" id="HGNC:5879">
    <property type="gene designation" value="IGLV1-44"/>
</dbReference>
<dbReference type="HPA" id="ENSG00000211651">
    <property type="expression patterns" value="Group enriched (intestine, lymphoid tissue, stomach)"/>
</dbReference>
<dbReference type="neXtProt" id="NX_P01699"/>
<dbReference type="OpenTargets" id="ENSG00000211651"/>
<dbReference type="VEuPathDB" id="HostDB:ENSG00000211651"/>
<dbReference type="GeneTree" id="ENSGT00940000154293"/>
<dbReference type="InParanoid" id="P01699"/>
<dbReference type="OMA" id="TIIYWND"/>
<dbReference type="PAN-GO" id="P01699">
    <property type="GO annotations" value="3 GO annotations based on evolutionary models"/>
</dbReference>
<dbReference type="PhylomeDB" id="P01699"/>
<dbReference type="PathwayCommons" id="P01699"/>
<dbReference type="Reactome" id="R-HSA-166663">
    <property type="pathway name" value="Initial triggering of complement"/>
</dbReference>
<dbReference type="Reactome" id="R-HSA-173623">
    <property type="pathway name" value="Classical antibody-mediated complement activation"/>
</dbReference>
<dbReference type="Reactome" id="R-HSA-198933">
    <property type="pathway name" value="Immunoregulatory interactions between a Lymphoid and a non-Lymphoid cell"/>
</dbReference>
<dbReference type="Reactome" id="R-HSA-202733">
    <property type="pathway name" value="Cell surface interactions at the vascular wall"/>
</dbReference>
<dbReference type="Reactome" id="R-HSA-2029481">
    <property type="pathway name" value="FCGR activation"/>
</dbReference>
<dbReference type="Reactome" id="R-HSA-2029482">
    <property type="pathway name" value="Regulation of actin dynamics for phagocytic cup formation"/>
</dbReference>
<dbReference type="Reactome" id="R-HSA-2029485">
    <property type="pathway name" value="Role of phospholipids in phagocytosis"/>
</dbReference>
<dbReference type="Reactome" id="R-HSA-2168880">
    <property type="pathway name" value="Scavenging of heme from plasma"/>
</dbReference>
<dbReference type="Reactome" id="R-HSA-2454202">
    <property type="pathway name" value="Fc epsilon receptor (FCERI) signaling"/>
</dbReference>
<dbReference type="Reactome" id="R-HSA-2730905">
    <property type="pathway name" value="Role of LAT2/NTAL/LAB on calcium mobilization"/>
</dbReference>
<dbReference type="Reactome" id="R-HSA-2871796">
    <property type="pathway name" value="FCERI mediated MAPK activation"/>
</dbReference>
<dbReference type="Reactome" id="R-HSA-2871809">
    <property type="pathway name" value="FCERI mediated Ca+2 mobilization"/>
</dbReference>
<dbReference type="Reactome" id="R-HSA-2871837">
    <property type="pathway name" value="FCERI mediated NF-kB activation"/>
</dbReference>
<dbReference type="Reactome" id="R-HSA-5690714">
    <property type="pathway name" value="CD22 mediated BCR regulation"/>
</dbReference>
<dbReference type="Reactome" id="R-HSA-9664323">
    <property type="pathway name" value="FCGR3A-mediated IL10 synthesis"/>
</dbReference>
<dbReference type="Reactome" id="R-HSA-9664422">
    <property type="pathway name" value="FCGR3A-mediated phagocytosis"/>
</dbReference>
<dbReference type="Reactome" id="R-HSA-9679191">
    <property type="pathway name" value="Potential therapeutics for SARS"/>
</dbReference>
<dbReference type="Reactome" id="R-HSA-977606">
    <property type="pathway name" value="Regulation of Complement cascade"/>
</dbReference>
<dbReference type="Reactome" id="R-HSA-983695">
    <property type="pathway name" value="Antigen activates B Cell Receptor (BCR) leading to generation of second messengers"/>
</dbReference>
<dbReference type="ChiTaRS" id="IGLV1-44">
    <property type="organism name" value="human"/>
</dbReference>
<dbReference type="Pharos" id="P01699">
    <property type="development level" value="Tdark"/>
</dbReference>
<dbReference type="PRO" id="PR:P01699"/>
<dbReference type="Proteomes" id="UP000005640">
    <property type="component" value="Chromosome 22"/>
</dbReference>
<dbReference type="RNAct" id="P01699">
    <property type="molecule type" value="protein"/>
</dbReference>
<dbReference type="Bgee" id="ENSG00000211651">
    <property type="expression patterns" value="Expressed in rectum and 93 other cell types or tissues"/>
</dbReference>
<dbReference type="GO" id="GO:0005576">
    <property type="term" value="C:extracellular region"/>
    <property type="evidence" value="ECO:0000304"/>
    <property type="project" value="Reactome"/>
</dbReference>
<dbReference type="GO" id="GO:0019814">
    <property type="term" value="C:immunoglobulin complex"/>
    <property type="evidence" value="ECO:0000318"/>
    <property type="project" value="GO_Central"/>
</dbReference>
<dbReference type="GO" id="GO:0005886">
    <property type="term" value="C:plasma membrane"/>
    <property type="evidence" value="ECO:0000304"/>
    <property type="project" value="Reactome"/>
</dbReference>
<dbReference type="GO" id="GO:0003823">
    <property type="term" value="F:antigen binding"/>
    <property type="evidence" value="ECO:0000303"/>
    <property type="project" value="UniProtKB"/>
</dbReference>
<dbReference type="GO" id="GO:0002250">
    <property type="term" value="P:adaptive immune response"/>
    <property type="evidence" value="ECO:0007669"/>
    <property type="project" value="UniProtKB-KW"/>
</dbReference>
<dbReference type="GO" id="GO:0006955">
    <property type="term" value="P:immune response"/>
    <property type="evidence" value="ECO:0000318"/>
    <property type="project" value="GO_Central"/>
</dbReference>
<dbReference type="FunFam" id="2.60.40.10:FF:000442">
    <property type="entry name" value="Immunoglobulin lambda variable 2-8"/>
    <property type="match status" value="1"/>
</dbReference>
<dbReference type="Gene3D" id="2.60.40.10">
    <property type="entry name" value="Immunoglobulins"/>
    <property type="match status" value="1"/>
</dbReference>
<dbReference type="InterPro" id="IPR007110">
    <property type="entry name" value="Ig-like_dom"/>
</dbReference>
<dbReference type="InterPro" id="IPR036179">
    <property type="entry name" value="Ig-like_dom_sf"/>
</dbReference>
<dbReference type="InterPro" id="IPR013783">
    <property type="entry name" value="Ig-like_fold"/>
</dbReference>
<dbReference type="InterPro" id="IPR003599">
    <property type="entry name" value="Ig_sub"/>
</dbReference>
<dbReference type="InterPro" id="IPR013106">
    <property type="entry name" value="Ig_V-set"/>
</dbReference>
<dbReference type="InterPro" id="IPR050150">
    <property type="entry name" value="IgV_Light_Chain"/>
</dbReference>
<dbReference type="PANTHER" id="PTHR23267">
    <property type="entry name" value="IMMUNOGLOBULIN LIGHT CHAIN"/>
    <property type="match status" value="1"/>
</dbReference>
<dbReference type="Pfam" id="PF07686">
    <property type="entry name" value="V-set"/>
    <property type="match status" value="1"/>
</dbReference>
<dbReference type="SMART" id="SM00409">
    <property type="entry name" value="IG"/>
    <property type="match status" value="1"/>
</dbReference>
<dbReference type="SMART" id="SM00406">
    <property type="entry name" value="IGv"/>
    <property type="match status" value="1"/>
</dbReference>
<dbReference type="SUPFAM" id="SSF48726">
    <property type="entry name" value="Immunoglobulin"/>
    <property type="match status" value="1"/>
</dbReference>
<dbReference type="PROSITE" id="PS50835">
    <property type="entry name" value="IG_LIKE"/>
    <property type="match status" value="1"/>
</dbReference>